<keyword id="KW-0378">Hydrolase</keyword>
<keyword id="KW-0460">Magnesium</keyword>
<keyword id="KW-0479">Metal-binding</keyword>
<keyword id="KW-0546">Nucleotide metabolism</keyword>
<keyword id="KW-1185">Reference proteome</keyword>
<dbReference type="EC" id="3.6.1.23" evidence="1"/>
<dbReference type="EMBL" id="CP001124">
    <property type="protein sequence ID" value="ACH38329.1"/>
    <property type="molecule type" value="Genomic_DNA"/>
</dbReference>
<dbReference type="RefSeq" id="WP_012529740.1">
    <property type="nucleotide sequence ID" value="NC_011146.1"/>
</dbReference>
<dbReference type="SMR" id="B5EI65"/>
<dbReference type="STRING" id="404380.Gbem_1310"/>
<dbReference type="KEGG" id="gbm:Gbem_1310"/>
<dbReference type="eggNOG" id="COG0756">
    <property type="taxonomic scope" value="Bacteria"/>
</dbReference>
<dbReference type="HOGENOM" id="CLU_068508_1_2_7"/>
<dbReference type="OrthoDB" id="9809956at2"/>
<dbReference type="UniPathway" id="UPA00610">
    <property type="reaction ID" value="UER00666"/>
</dbReference>
<dbReference type="Proteomes" id="UP000008825">
    <property type="component" value="Chromosome"/>
</dbReference>
<dbReference type="GO" id="GO:0004170">
    <property type="term" value="F:dUTP diphosphatase activity"/>
    <property type="evidence" value="ECO:0007669"/>
    <property type="project" value="UniProtKB-UniRule"/>
</dbReference>
<dbReference type="GO" id="GO:0000287">
    <property type="term" value="F:magnesium ion binding"/>
    <property type="evidence" value="ECO:0007669"/>
    <property type="project" value="UniProtKB-UniRule"/>
</dbReference>
<dbReference type="GO" id="GO:0006226">
    <property type="term" value="P:dUMP biosynthetic process"/>
    <property type="evidence" value="ECO:0007669"/>
    <property type="project" value="UniProtKB-UniRule"/>
</dbReference>
<dbReference type="GO" id="GO:0046081">
    <property type="term" value="P:dUTP catabolic process"/>
    <property type="evidence" value="ECO:0007669"/>
    <property type="project" value="InterPro"/>
</dbReference>
<dbReference type="CDD" id="cd07557">
    <property type="entry name" value="trimeric_dUTPase"/>
    <property type="match status" value="1"/>
</dbReference>
<dbReference type="FunFam" id="2.70.40.10:FF:000002">
    <property type="entry name" value="dUTP diphosphatase"/>
    <property type="match status" value="1"/>
</dbReference>
<dbReference type="Gene3D" id="2.70.40.10">
    <property type="match status" value="1"/>
</dbReference>
<dbReference type="HAMAP" id="MF_00116">
    <property type="entry name" value="dUTPase_bact"/>
    <property type="match status" value="1"/>
</dbReference>
<dbReference type="InterPro" id="IPR008181">
    <property type="entry name" value="dUTPase"/>
</dbReference>
<dbReference type="InterPro" id="IPR029054">
    <property type="entry name" value="dUTPase-like"/>
</dbReference>
<dbReference type="InterPro" id="IPR036157">
    <property type="entry name" value="dUTPase-like_sf"/>
</dbReference>
<dbReference type="InterPro" id="IPR033704">
    <property type="entry name" value="dUTPase_trimeric"/>
</dbReference>
<dbReference type="NCBIfam" id="TIGR00576">
    <property type="entry name" value="dut"/>
    <property type="match status" value="1"/>
</dbReference>
<dbReference type="NCBIfam" id="NF001862">
    <property type="entry name" value="PRK00601.1"/>
    <property type="match status" value="1"/>
</dbReference>
<dbReference type="PANTHER" id="PTHR11241">
    <property type="entry name" value="DEOXYURIDINE 5'-TRIPHOSPHATE NUCLEOTIDOHYDROLASE"/>
    <property type="match status" value="1"/>
</dbReference>
<dbReference type="PANTHER" id="PTHR11241:SF0">
    <property type="entry name" value="DEOXYURIDINE 5'-TRIPHOSPHATE NUCLEOTIDOHYDROLASE"/>
    <property type="match status" value="1"/>
</dbReference>
<dbReference type="Pfam" id="PF00692">
    <property type="entry name" value="dUTPase"/>
    <property type="match status" value="1"/>
</dbReference>
<dbReference type="SUPFAM" id="SSF51283">
    <property type="entry name" value="dUTPase-like"/>
    <property type="match status" value="1"/>
</dbReference>
<protein>
    <recommendedName>
        <fullName evidence="1">Deoxyuridine 5'-triphosphate nucleotidohydrolase</fullName>
        <shortName evidence="1">dUTPase</shortName>
        <ecNumber evidence="1">3.6.1.23</ecNumber>
    </recommendedName>
    <alternativeName>
        <fullName evidence="1">dUTP pyrophosphatase</fullName>
    </alternativeName>
</protein>
<comment type="function">
    <text evidence="1">This enzyme is involved in nucleotide metabolism: it produces dUMP, the immediate precursor of thymidine nucleotides and it decreases the intracellular concentration of dUTP so that uracil cannot be incorporated into DNA.</text>
</comment>
<comment type="catalytic activity">
    <reaction evidence="1">
        <text>dUTP + H2O = dUMP + diphosphate + H(+)</text>
        <dbReference type="Rhea" id="RHEA:10248"/>
        <dbReference type="ChEBI" id="CHEBI:15377"/>
        <dbReference type="ChEBI" id="CHEBI:15378"/>
        <dbReference type="ChEBI" id="CHEBI:33019"/>
        <dbReference type="ChEBI" id="CHEBI:61555"/>
        <dbReference type="ChEBI" id="CHEBI:246422"/>
        <dbReference type="EC" id="3.6.1.23"/>
    </reaction>
</comment>
<comment type="cofactor">
    <cofactor evidence="1">
        <name>Mg(2+)</name>
        <dbReference type="ChEBI" id="CHEBI:18420"/>
    </cofactor>
</comment>
<comment type="pathway">
    <text evidence="1">Pyrimidine metabolism; dUMP biosynthesis; dUMP from dCTP (dUTP route): step 2/2.</text>
</comment>
<comment type="similarity">
    <text evidence="1">Belongs to the dUTPase family.</text>
</comment>
<proteinExistence type="inferred from homology"/>
<feature type="chain" id="PRO_1000094965" description="Deoxyuridine 5'-triphosphate nucleotidohydrolase">
    <location>
        <begin position="1"/>
        <end position="146"/>
    </location>
</feature>
<feature type="binding site" evidence="1">
    <location>
        <begin position="66"/>
        <end position="68"/>
    </location>
    <ligand>
        <name>substrate</name>
    </ligand>
</feature>
<feature type="binding site" evidence="1">
    <location>
        <position position="79"/>
    </location>
    <ligand>
        <name>substrate</name>
    </ligand>
</feature>
<feature type="binding site" evidence="1">
    <location>
        <begin position="83"/>
        <end position="85"/>
    </location>
    <ligand>
        <name>substrate</name>
    </ligand>
</feature>
<accession>B5EI65</accession>
<organism>
    <name type="scientific">Citrifermentans bemidjiense (strain ATCC BAA-1014 / DSM 16622 / JCM 12645 / Bem)</name>
    <name type="common">Geobacter bemidjiensis</name>
    <dbReference type="NCBI Taxonomy" id="404380"/>
    <lineage>
        <taxon>Bacteria</taxon>
        <taxon>Pseudomonadati</taxon>
        <taxon>Thermodesulfobacteriota</taxon>
        <taxon>Desulfuromonadia</taxon>
        <taxon>Geobacterales</taxon>
        <taxon>Geobacteraceae</taxon>
        <taxon>Citrifermentans</taxon>
    </lineage>
</organism>
<sequence length="146" mass="15410">MGSLPVRIKRLRATPLPAYMTEHAAGVDLCASLSADFVLAPGERALVPTGLAIELPPGFEAQVRPRSGLALRHGIALVNSPGTIDADYRGEIGVILINLGSEPFTVSDGERIAQMVFARCERAEFIEVDELGDTARGAGGFGHTGR</sequence>
<name>DUT_CITBB</name>
<evidence type="ECO:0000255" key="1">
    <source>
        <dbReference type="HAMAP-Rule" id="MF_00116"/>
    </source>
</evidence>
<reference key="1">
    <citation type="submission" date="2008-07" db="EMBL/GenBank/DDBJ databases">
        <title>Complete sequence of Geobacter bemidjiensis BEM.</title>
        <authorList>
            <consortium name="US DOE Joint Genome Institute"/>
            <person name="Lucas S."/>
            <person name="Copeland A."/>
            <person name="Lapidus A."/>
            <person name="Glavina del Rio T."/>
            <person name="Dalin E."/>
            <person name="Tice H."/>
            <person name="Bruce D."/>
            <person name="Goodwin L."/>
            <person name="Pitluck S."/>
            <person name="Kiss H."/>
            <person name="Brettin T."/>
            <person name="Detter J.C."/>
            <person name="Han C."/>
            <person name="Kuske C.R."/>
            <person name="Schmutz J."/>
            <person name="Larimer F."/>
            <person name="Land M."/>
            <person name="Hauser L."/>
            <person name="Kyrpides N."/>
            <person name="Lykidis A."/>
            <person name="Lovley D."/>
            <person name="Richardson P."/>
        </authorList>
    </citation>
    <scope>NUCLEOTIDE SEQUENCE [LARGE SCALE GENOMIC DNA]</scope>
    <source>
        <strain>ATCC BAA-1014 / DSM 16622 / JCM 12645 / Bem</strain>
    </source>
</reference>
<gene>
    <name evidence="1" type="primary">dut</name>
    <name type="ordered locus">Gbem_1310</name>
</gene>